<accession>C4K901</accession>
<comment type="function">
    <text evidence="1">This protein binds to 23S rRNA in the presence of protein L20.</text>
</comment>
<comment type="subunit">
    <text evidence="1">Part of the 50S ribosomal subunit. Contacts protein L20.</text>
</comment>
<comment type="similarity">
    <text evidence="1">Belongs to the bacterial ribosomal protein bL21 family.</text>
</comment>
<protein>
    <recommendedName>
        <fullName evidence="1">Large ribosomal subunit protein bL21</fullName>
    </recommendedName>
    <alternativeName>
        <fullName evidence="2">50S ribosomal protein L21</fullName>
    </alternativeName>
</protein>
<sequence length="103" mass="11703">MYAVFQSGGKQHRVTEGETVRLEKLSNVTGEKINFNQVLMISDGETIKVGAPLINGGLVQAEVMAHGRADKIKIIKFRRRKHYRKQQGHRQWFTDVKIIGIIS</sequence>
<reference key="1">
    <citation type="journal article" date="2009" name="Proc. Natl. Acad. Sci. U.S.A.">
        <title>Hamiltonella defensa, genome evolution of protective bacterial endosymbiont from pathogenic ancestors.</title>
        <authorList>
            <person name="Degnan P.H."/>
            <person name="Yu Y."/>
            <person name="Sisneros N."/>
            <person name="Wing R.A."/>
            <person name="Moran N.A."/>
        </authorList>
    </citation>
    <scope>NUCLEOTIDE SEQUENCE [LARGE SCALE GENOMIC DNA]</scope>
    <source>
        <strain>5AT</strain>
    </source>
</reference>
<keyword id="KW-0687">Ribonucleoprotein</keyword>
<keyword id="KW-0689">Ribosomal protein</keyword>
<keyword id="KW-0694">RNA-binding</keyword>
<keyword id="KW-0699">rRNA-binding</keyword>
<organism>
    <name type="scientific">Hamiltonella defensa subsp. Acyrthosiphon pisum (strain 5AT)</name>
    <dbReference type="NCBI Taxonomy" id="572265"/>
    <lineage>
        <taxon>Bacteria</taxon>
        <taxon>Pseudomonadati</taxon>
        <taxon>Pseudomonadota</taxon>
        <taxon>Gammaproteobacteria</taxon>
        <taxon>Enterobacterales</taxon>
        <taxon>Enterobacteriaceae</taxon>
        <taxon>aphid secondary symbionts</taxon>
        <taxon>Candidatus Hamiltonella</taxon>
    </lineage>
</organism>
<name>RL21_HAMD5</name>
<dbReference type="EMBL" id="CP001277">
    <property type="protein sequence ID" value="ACQ68870.1"/>
    <property type="molecule type" value="Genomic_DNA"/>
</dbReference>
<dbReference type="RefSeq" id="WP_015874589.1">
    <property type="nucleotide sequence ID" value="NC_012751.1"/>
</dbReference>
<dbReference type="SMR" id="C4K901"/>
<dbReference type="STRING" id="572265.HDEF_2333"/>
<dbReference type="GeneID" id="66261822"/>
<dbReference type="KEGG" id="hde:HDEF_2333"/>
<dbReference type="eggNOG" id="COG0261">
    <property type="taxonomic scope" value="Bacteria"/>
</dbReference>
<dbReference type="HOGENOM" id="CLU_061463_3_3_6"/>
<dbReference type="Proteomes" id="UP000002334">
    <property type="component" value="Chromosome"/>
</dbReference>
<dbReference type="GO" id="GO:0005737">
    <property type="term" value="C:cytoplasm"/>
    <property type="evidence" value="ECO:0007669"/>
    <property type="project" value="UniProtKB-ARBA"/>
</dbReference>
<dbReference type="GO" id="GO:1990904">
    <property type="term" value="C:ribonucleoprotein complex"/>
    <property type="evidence" value="ECO:0007669"/>
    <property type="project" value="UniProtKB-KW"/>
</dbReference>
<dbReference type="GO" id="GO:0005840">
    <property type="term" value="C:ribosome"/>
    <property type="evidence" value="ECO:0007669"/>
    <property type="project" value="UniProtKB-KW"/>
</dbReference>
<dbReference type="GO" id="GO:0019843">
    <property type="term" value="F:rRNA binding"/>
    <property type="evidence" value="ECO:0007669"/>
    <property type="project" value="UniProtKB-UniRule"/>
</dbReference>
<dbReference type="GO" id="GO:0003735">
    <property type="term" value="F:structural constituent of ribosome"/>
    <property type="evidence" value="ECO:0007669"/>
    <property type="project" value="InterPro"/>
</dbReference>
<dbReference type="GO" id="GO:0006412">
    <property type="term" value="P:translation"/>
    <property type="evidence" value="ECO:0007669"/>
    <property type="project" value="UniProtKB-UniRule"/>
</dbReference>
<dbReference type="HAMAP" id="MF_01363">
    <property type="entry name" value="Ribosomal_bL21"/>
    <property type="match status" value="1"/>
</dbReference>
<dbReference type="InterPro" id="IPR028909">
    <property type="entry name" value="bL21-like"/>
</dbReference>
<dbReference type="InterPro" id="IPR036164">
    <property type="entry name" value="bL21-like_sf"/>
</dbReference>
<dbReference type="InterPro" id="IPR001787">
    <property type="entry name" value="Ribosomal_bL21"/>
</dbReference>
<dbReference type="InterPro" id="IPR018258">
    <property type="entry name" value="Ribosomal_bL21_CS"/>
</dbReference>
<dbReference type="NCBIfam" id="TIGR00061">
    <property type="entry name" value="L21"/>
    <property type="match status" value="1"/>
</dbReference>
<dbReference type="PANTHER" id="PTHR21349">
    <property type="entry name" value="50S RIBOSOMAL PROTEIN L21"/>
    <property type="match status" value="1"/>
</dbReference>
<dbReference type="PANTHER" id="PTHR21349:SF0">
    <property type="entry name" value="LARGE RIBOSOMAL SUBUNIT PROTEIN BL21M"/>
    <property type="match status" value="1"/>
</dbReference>
<dbReference type="Pfam" id="PF00829">
    <property type="entry name" value="Ribosomal_L21p"/>
    <property type="match status" value="1"/>
</dbReference>
<dbReference type="SUPFAM" id="SSF141091">
    <property type="entry name" value="L21p-like"/>
    <property type="match status" value="1"/>
</dbReference>
<dbReference type="PROSITE" id="PS01169">
    <property type="entry name" value="RIBOSOMAL_L21"/>
    <property type="match status" value="1"/>
</dbReference>
<evidence type="ECO:0000255" key="1">
    <source>
        <dbReference type="HAMAP-Rule" id="MF_01363"/>
    </source>
</evidence>
<evidence type="ECO:0000305" key="2"/>
<feature type="chain" id="PRO_1000214894" description="Large ribosomal subunit protein bL21">
    <location>
        <begin position="1"/>
        <end position="103"/>
    </location>
</feature>
<proteinExistence type="inferred from homology"/>
<gene>
    <name evidence="1" type="primary">rplU</name>
    <name type="ordered locus">HDEF_2333</name>
</gene>